<reference key="1">
    <citation type="journal article" date="1995" name="Mol. Phylogenet. Evol.">
        <title>Phylogeny of six Sciurus aberti subspecies based on nucleotide sequences of cytochrome b.</title>
        <authorList>
            <person name="Wettstein P.J."/>
            <person name="Strausbauch M."/>
            <person name="Lamb T."/>
            <person name="States J."/>
            <person name="Chakraborty R."/>
            <person name="Jin L."/>
            <person name="Riblet R."/>
        </authorList>
    </citation>
    <scope>NUCLEOTIDE SEQUENCE [GENOMIC DNA]</scope>
    <source>
        <strain>Isolate A107</strain>
        <strain>Isolate A111</strain>
        <strain>Isolate A79</strain>
        <strain>Isolate B9</strain>
        <strain>Isolate D1</strain>
    </source>
</reference>
<evidence type="ECO:0000250" key="1"/>
<evidence type="ECO:0000250" key="2">
    <source>
        <dbReference type="UniProtKB" id="P00157"/>
    </source>
</evidence>
<evidence type="ECO:0000255" key="3">
    <source>
        <dbReference type="PROSITE-ProRule" id="PRU00967"/>
    </source>
</evidence>
<evidence type="ECO:0000255" key="4">
    <source>
        <dbReference type="PROSITE-ProRule" id="PRU00968"/>
    </source>
</evidence>
<sequence length="378" mass="42920">MTNIRKPPLLKIVNHSFIDLPAPSNISAWWNFGSLLGLCLVIQILTGLFLAMHYTSDTMTAFSSVTHICRDVNYGWLIRYMHANGASMFFICLFLHVGRGLYYGSYTYFETWNIGVILLFAVMATAFMGYVLPWGQMSFWGATVITNLLSAIPYIGTTLVEWIWGGFSVDKATLTRFFAFHFILPFIVAALVMVHLLFLHETGSNNPSGLISDSDKIPFHPYYTIKDALGIFLLLLLFMTLVLFFPDLLGDPDNYTPANPLNTPPHIKPEWYFLFAYAILRSIPNKLGGVLALIFSILILMMFPILHVSKQRSMMFRPLSQCLFWILVADLFTLTWIGGQPVEHPFITIGQVASIIYFVIILFALPIISMLENKLLKW</sequence>
<comment type="function">
    <text evidence="2">Component of the ubiquinol-cytochrome c reductase complex (complex III or cytochrome b-c1 complex) that is part of the mitochondrial respiratory chain. The b-c1 complex mediates electron transfer from ubiquinol to cytochrome c. Contributes to the generation of a proton gradient across the mitochondrial membrane that is then used for ATP synthesis.</text>
</comment>
<comment type="cofactor">
    <cofactor evidence="2">
        <name>heme b</name>
        <dbReference type="ChEBI" id="CHEBI:60344"/>
    </cofactor>
    <text evidence="2">Binds 2 heme b groups non-covalently.</text>
</comment>
<comment type="subunit">
    <text evidence="2">The cytochrome bc1 complex contains 11 subunits: 3 respiratory subunits (MT-CYB, CYC1 and UQCRFS1), 2 core proteins (UQCRC1 and UQCRC2) and 6 low-molecular weight proteins (UQCRH/QCR6, UQCRB/QCR7, UQCRQ/QCR8, UQCR10/QCR9, UQCR11/QCR10 and a cleavage product of UQCRFS1). This cytochrome bc1 complex then forms a dimer.</text>
</comment>
<comment type="subcellular location">
    <subcellularLocation>
        <location evidence="2">Mitochondrion inner membrane</location>
        <topology evidence="2">Multi-pass membrane protein</topology>
    </subcellularLocation>
</comment>
<comment type="miscellaneous">
    <text evidence="1">Heme 1 (or BL or b562) is low-potential and absorbs at about 562 nm, and heme 2 (or BH or b566) is high-potential and absorbs at about 566 nm.</text>
</comment>
<comment type="similarity">
    <text evidence="3 4">Belongs to the cytochrome b family.</text>
</comment>
<comment type="caution">
    <text evidence="2">The full-length protein contains only eight transmembrane helices, not nine as predicted by bioinformatics tools.</text>
</comment>
<protein>
    <recommendedName>
        <fullName>Cytochrome b</fullName>
    </recommendedName>
    <alternativeName>
        <fullName>Complex III subunit 3</fullName>
    </alternativeName>
    <alternativeName>
        <fullName>Complex III subunit III</fullName>
    </alternativeName>
    <alternativeName>
        <fullName>Cytochrome b-c1 complex subunit 3</fullName>
    </alternativeName>
    <alternativeName>
        <fullName>Ubiquinol-cytochrome-c reductase complex cytochrome b subunit</fullName>
    </alternativeName>
</protein>
<accession>Q37064</accession>
<accession>Q37097</accession>
<name>CYB_SCIAB</name>
<gene>
    <name type="primary">MT-CYB</name>
    <name type="synonym">COB</name>
    <name type="synonym">CYTB</name>
    <name type="synonym">MTCYB</name>
</gene>
<proteinExistence type="inferred from homology"/>
<geneLocation type="mitochondrion"/>
<feature type="chain" id="PRO_0000061528" description="Cytochrome b">
    <location>
        <begin position="1"/>
        <end position="378"/>
    </location>
</feature>
<feature type="transmembrane region" description="Helical" evidence="2">
    <location>
        <begin position="32"/>
        <end position="52"/>
    </location>
</feature>
<feature type="transmembrane region" description="Helical" evidence="2">
    <location>
        <begin position="76"/>
        <end position="97"/>
    </location>
</feature>
<feature type="transmembrane region" description="Helical" evidence="2">
    <location>
        <begin position="112"/>
        <end position="132"/>
    </location>
</feature>
<feature type="transmembrane region" description="Helical" evidence="2">
    <location>
        <begin position="177"/>
        <end position="197"/>
    </location>
</feature>
<feature type="transmembrane region" description="Helical" evidence="2">
    <location>
        <begin position="225"/>
        <end position="245"/>
    </location>
</feature>
<feature type="transmembrane region" description="Helical" evidence="2">
    <location>
        <begin position="287"/>
        <end position="307"/>
    </location>
</feature>
<feature type="transmembrane region" description="Helical" evidence="2">
    <location>
        <begin position="319"/>
        <end position="339"/>
    </location>
</feature>
<feature type="transmembrane region" description="Helical" evidence="2">
    <location>
        <begin position="346"/>
        <end position="366"/>
    </location>
</feature>
<feature type="binding site" description="axial binding residue" evidence="2">
    <location>
        <position position="82"/>
    </location>
    <ligand>
        <name>heme b</name>
        <dbReference type="ChEBI" id="CHEBI:60344"/>
        <label>b562</label>
    </ligand>
    <ligandPart>
        <name>Fe</name>
        <dbReference type="ChEBI" id="CHEBI:18248"/>
    </ligandPart>
</feature>
<feature type="binding site" description="axial binding residue" evidence="2">
    <location>
        <position position="96"/>
    </location>
    <ligand>
        <name>heme b</name>
        <dbReference type="ChEBI" id="CHEBI:60344"/>
        <label>b566</label>
    </ligand>
    <ligandPart>
        <name>Fe</name>
        <dbReference type="ChEBI" id="CHEBI:18248"/>
    </ligandPart>
</feature>
<feature type="binding site" description="axial binding residue" evidence="2">
    <location>
        <position position="181"/>
    </location>
    <ligand>
        <name>heme b</name>
        <dbReference type="ChEBI" id="CHEBI:60344"/>
        <label>b562</label>
    </ligand>
    <ligandPart>
        <name>Fe</name>
        <dbReference type="ChEBI" id="CHEBI:18248"/>
    </ligandPart>
</feature>
<feature type="binding site" description="axial binding residue" evidence="2">
    <location>
        <position position="195"/>
    </location>
    <ligand>
        <name>heme b</name>
        <dbReference type="ChEBI" id="CHEBI:60344"/>
        <label>b566</label>
    </ligand>
    <ligandPart>
        <name>Fe</name>
        <dbReference type="ChEBI" id="CHEBI:18248"/>
    </ligandPart>
</feature>
<feature type="binding site" evidence="2">
    <location>
        <position position="200"/>
    </location>
    <ligand>
        <name>a ubiquinone</name>
        <dbReference type="ChEBI" id="CHEBI:16389"/>
    </ligand>
</feature>
<feature type="sequence variant" description="In strain: Isolate B9 and Isolate D1.">
    <original>F</original>
    <variation>S</variation>
    <location>
        <position position="167"/>
    </location>
</feature>
<feature type="sequence variant" description="In strain: Isolate B9 and Isolate D1.">
    <original>IF</original>
    <variation>L</variation>
    <location>
        <begin position="231"/>
        <end position="232"/>
    </location>
</feature>
<feature type="sequence variant" description="In strain: Isolate B9 and Isolate D1.">
    <original>T</original>
    <variation>I</variation>
    <location>
        <position position="240"/>
    </location>
</feature>
<organism>
    <name type="scientific">Sciurus aberti</name>
    <name type="common">Abert's squirrel</name>
    <dbReference type="NCBI Taxonomy" id="10007"/>
    <lineage>
        <taxon>Eukaryota</taxon>
        <taxon>Metazoa</taxon>
        <taxon>Chordata</taxon>
        <taxon>Craniata</taxon>
        <taxon>Vertebrata</taxon>
        <taxon>Euteleostomi</taxon>
        <taxon>Mammalia</taxon>
        <taxon>Eutheria</taxon>
        <taxon>Euarchontoglires</taxon>
        <taxon>Glires</taxon>
        <taxon>Rodentia</taxon>
        <taxon>Sciuromorpha</taxon>
        <taxon>Sciuridae</taxon>
        <taxon>Sciurinae</taxon>
        <taxon>Sciurini</taxon>
        <taxon>Sciurus</taxon>
    </lineage>
</organism>
<keyword id="KW-0249">Electron transport</keyword>
<keyword id="KW-0349">Heme</keyword>
<keyword id="KW-0408">Iron</keyword>
<keyword id="KW-0472">Membrane</keyword>
<keyword id="KW-0479">Metal-binding</keyword>
<keyword id="KW-0496">Mitochondrion</keyword>
<keyword id="KW-0999">Mitochondrion inner membrane</keyword>
<keyword id="KW-0679">Respiratory chain</keyword>
<keyword id="KW-0812">Transmembrane</keyword>
<keyword id="KW-1133">Transmembrane helix</keyword>
<keyword id="KW-0813">Transport</keyword>
<keyword id="KW-0830">Ubiquinone</keyword>
<dbReference type="EMBL" id="U10163">
    <property type="protein sequence ID" value="AAB05562.1"/>
    <property type="molecule type" value="Genomic_DNA"/>
</dbReference>
<dbReference type="EMBL" id="U10165">
    <property type="protein sequence ID" value="AAB05564.1"/>
    <property type="molecule type" value="Genomic_DNA"/>
</dbReference>
<dbReference type="EMBL" id="U10168">
    <property type="protein sequence ID" value="AAB05567.1"/>
    <property type="molecule type" value="Genomic_DNA"/>
</dbReference>
<dbReference type="EMBL" id="U10175">
    <property type="protein sequence ID" value="AAB05585.1"/>
    <property type="molecule type" value="Genomic_DNA"/>
</dbReference>
<dbReference type="EMBL" id="U10177">
    <property type="protein sequence ID" value="AAB05587.1"/>
    <property type="molecule type" value="Genomic_DNA"/>
</dbReference>
<dbReference type="SMR" id="Q37064"/>
<dbReference type="GO" id="GO:0005743">
    <property type="term" value="C:mitochondrial inner membrane"/>
    <property type="evidence" value="ECO:0007669"/>
    <property type="project" value="UniProtKB-SubCell"/>
</dbReference>
<dbReference type="GO" id="GO:0045275">
    <property type="term" value="C:respiratory chain complex III"/>
    <property type="evidence" value="ECO:0007669"/>
    <property type="project" value="InterPro"/>
</dbReference>
<dbReference type="GO" id="GO:0046872">
    <property type="term" value="F:metal ion binding"/>
    <property type="evidence" value="ECO:0007669"/>
    <property type="project" value="UniProtKB-KW"/>
</dbReference>
<dbReference type="GO" id="GO:0008121">
    <property type="term" value="F:ubiquinol-cytochrome-c reductase activity"/>
    <property type="evidence" value="ECO:0007669"/>
    <property type="project" value="InterPro"/>
</dbReference>
<dbReference type="GO" id="GO:0006122">
    <property type="term" value="P:mitochondrial electron transport, ubiquinol to cytochrome c"/>
    <property type="evidence" value="ECO:0007669"/>
    <property type="project" value="TreeGrafter"/>
</dbReference>
<dbReference type="CDD" id="cd00290">
    <property type="entry name" value="cytochrome_b_C"/>
    <property type="match status" value="1"/>
</dbReference>
<dbReference type="CDD" id="cd00284">
    <property type="entry name" value="Cytochrome_b_N"/>
    <property type="match status" value="1"/>
</dbReference>
<dbReference type="FunFam" id="1.20.810.10:FF:000002">
    <property type="entry name" value="Cytochrome b"/>
    <property type="match status" value="1"/>
</dbReference>
<dbReference type="Gene3D" id="1.20.810.10">
    <property type="entry name" value="Cytochrome Bc1 Complex, Chain C"/>
    <property type="match status" value="1"/>
</dbReference>
<dbReference type="InterPro" id="IPR005798">
    <property type="entry name" value="Cyt_b/b6_C"/>
</dbReference>
<dbReference type="InterPro" id="IPR036150">
    <property type="entry name" value="Cyt_b/b6_C_sf"/>
</dbReference>
<dbReference type="InterPro" id="IPR005797">
    <property type="entry name" value="Cyt_b/b6_N"/>
</dbReference>
<dbReference type="InterPro" id="IPR027387">
    <property type="entry name" value="Cytb/b6-like_sf"/>
</dbReference>
<dbReference type="InterPro" id="IPR030689">
    <property type="entry name" value="Cytochrome_b"/>
</dbReference>
<dbReference type="InterPro" id="IPR048260">
    <property type="entry name" value="Cytochrome_b_C_euk/bac"/>
</dbReference>
<dbReference type="InterPro" id="IPR048259">
    <property type="entry name" value="Cytochrome_b_N_euk/bac"/>
</dbReference>
<dbReference type="InterPro" id="IPR016174">
    <property type="entry name" value="Di-haem_cyt_TM"/>
</dbReference>
<dbReference type="PANTHER" id="PTHR19271">
    <property type="entry name" value="CYTOCHROME B"/>
    <property type="match status" value="1"/>
</dbReference>
<dbReference type="PANTHER" id="PTHR19271:SF16">
    <property type="entry name" value="CYTOCHROME B"/>
    <property type="match status" value="1"/>
</dbReference>
<dbReference type="Pfam" id="PF00032">
    <property type="entry name" value="Cytochrom_B_C"/>
    <property type="match status" value="1"/>
</dbReference>
<dbReference type="Pfam" id="PF00033">
    <property type="entry name" value="Cytochrome_B"/>
    <property type="match status" value="1"/>
</dbReference>
<dbReference type="PIRSF" id="PIRSF038885">
    <property type="entry name" value="COB"/>
    <property type="match status" value="1"/>
</dbReference>
<dbReference type="SUPFAM" id="SSF81648">
    <property type="entry name" value="a domain/subunit of cytochrome bc1 complex (Ubiquinol-cytochrome c reductase)"/>
    <property type="match status" value="1"/>
</dbReference>
<dbReference type="SUPFAM" id="SSF81342">
    <property type="entry name" value="Transmembrane di-heme cytochromes"/>
    <property type="match status" value="1"/>
</dbReference>
<dbReference type="PROSITE" id="PS51003">
    <property type="entry name" value="CYTB_CTER"/>
    <property type="match status" value="1"/>
</dbReference>
<dbReference type="PROSITE" id="PS51002">
    <property type="entry name" value="CYTB_NTER"/>
    <property type="match status" value="1"/>
</dbReference>